<comment type="function">
    <text>This protein activates the expression of the nitrate reductase (narGHJI) and formate dehydrogenase-N (fdnGHI) operons and represses the transcription of the fumarate reductase (frdABCD) operon in response to a nitrate/nitrite induction signal transmitted by either the NarX or NarQ proteins.</text>
</comment>
<comment type="interaction">
    <interactant intactId="EBI-1122899">
        <id>P0AF28</id>
    </interactant>
    <interactant intactId="EBI-1122899">
        <id>P0AF28</id>
        <label>narL</label>
    </interactant>
    <organismsDiffer>false</organismsDiffer>
    <experiments>2</experiments>
</comment>
<comment type="interaction">
    <interactant intactId="EBI-1122899">
        <id>P0AF28</id>
    </interactant>
    <interactant intactId="EBI-1112775">
        <id>P0AFA2</id>
        <label>narX</label>
    </interactant>
    <organismsDiffer>false</organismsDiffer>
    <experiments>2</experiments>
</comment>
<comment type="sequence caution" evidence="3">
    <conflict type="erroneous initiation">
        <sequence resource="EMBL-CDS" id="CAA33023"/>
    </conflict>
</comment>
<evidence type="ECO:0000255" key="1">
    <source>
        <dbReference type="PROSITE-ProRule" id="PRU00169"/>
    </source>
</evidence>
<evidence type="ECO:0000255" key="2">
    <source>
        <dbReference type="PROSITE-ProRule" id="PRU00411"/>
    </source>
</evidence>
<evidence type="ECO:0000305" key="3"/>
<evidence type="ECO:0007829" key="4">
    <source>
        <dbReference type="PDB" id="1A04"/>
    </source>
</evidence>
<evidence type="ECO:0007829" key="5">
    <source>
        <dbReference type="PDB" id="1JE8"/>
    </source>
</evidence>
<evidence type="ECO:0007829" key="6">
    <source>
        <dbReference type="PDB" id="1RNL"/>
    </source>
</evidence>
<proteinExistence type="evidence at protein level"/>
<gene>
    <name type="primary">narL</name>
    <name type="synonym">frdR</name>
    <name type="ordered locus">b1221</name>
    <name type="ordered locus">JW1212</name>
</gene>
<sequence>MSNQEPATILLIDDHPMLRTGVKQLISMAPDITVVGEASNGEQGIELAESLDPDLILLDLNMPGMNGLETLDKLREKSLSGRIVVFSVSNHEEDVVTALKRGADGYLLKDMEPEDLLKALHQAAAGEMVLSEALTPVLAASLRANRATTERDVNQLTPRERDILKLIAQGLPNKMIARRLDITESTVKVHVKHMLKKMKLKSRVEAAVWVHQERIF</sequence>
<reference key="1">
    <citation type="journal article" date="1989" name="Nucleic Acids Res.">
        <title>The narX and narL genes encoding the nitrate-sensing regulators of Escherichia coli are homologous to a family of prokaryotic two-component regulatory genes.</title>
        <authorList>
            <person name="Nohno T."/>
            <person name="Noji S."/>
            <person name="Taniguchi S."/>
            <person name="Saito T."/>
        </authorList>
    </citation>
    <scope>NUCLEOTIDE SEQUENCE [GENOMIC DNA]</scope>
    <source>
        <strain>K12</strain>
    </source>
</reference>
<reference key="2">
    <citation type="journal article" date="1989" name="J. Bacteriol.">
        <title>Structure of genes narL and narX of the nar (nitrate reductase) locus in Escherichia coli K-12.</title>
        <authorList>
            <person name="Stewart V."/>
            <person name="Parales J. Jr."/>
            <person name="Merkel S.M."/>
        </authorList>
    </citation>
    <scope>NUCLEOTIDE SEQUENCE [GENOMIC DNA]</scope>
    <source>
        <strain>K12</strain>
    </source>
</reference>
<reference key="3">
    <citation type="journal article" date="1989" name="Nucleic Acids Res.">
        <title>Nucleotide sequence of the narL gene that is involved in global regulation of nitrate controlled respiratory genes of Escherichia coli.</title>
        <authorList>
            <person name="Gunsalus R.P."/>
            <person name="Kalman L.V."/>
            <person name="Stewart R.S."/>
        </authorList>
    </citation>
    <scope>NUCLEOTIDE SEQUENCE [GENOMIC DNA]</scope>
    <source>
        <strain>K12 / JM103 / ATCC 39403 / DSM 2829 / KCTC 1112 / NCIMB 12044</strain>
    </source>
</reference>
<reference key="4">
    <citation type="journal article" date="1996" name="DNA Res.">
        <title>A 718-kb DNA sequence of the Escherichia coli K-12 genome corresponding to the 12.7-28.0 min region on the linkage map.</title>
        <authorList>
            <person name="Oshima T."/>
            <person name="Aiba H."/>
            <person name="Baba T."/>
            <person name="Fujita K."/>
            <person name="Hayashi K."/>
            <person name="Honjo A."/>
            <person name="Ikemoto K."/>
            <person name="Inada T."/>
            <person name="Itoh T."/>
            <person name="Kajihara M."/>
            <person name="Kanai K."/>
            <person name="Kashimoto K."/>
            <person name="Kimura S."/>
            <person name="Kitagawa M."/>
            <person name="Makino K."/>
            <person name="Masuda S."/>
            <person name="Miki T."/>
            <person name="Mizobuchi K."/>
            <person name="Mori H."/>
            <person name="Motomura K."/>
            <person name="Nakamura Y."/>
            <person name="Nashimoto H."/>
            <person name="Nishio Y."/>
            <person name="Saito N."/>
            <person name="Sampei G."/>
            <person name="Seki Y."/>
            <person name="Tagami H."/>
            <person name="Takemoto K."/>
            <person name="Wada C."/>
            <person name="Yamamoto Y."/>
            <person name="Yano M."/>
            <person name="Horiuchi T."/>
        </authorList>
    </citation>
    <scope>NUCLEOTIDE SEQUENCE [LARGE SCALE GENOMIC DNA]</scope>
    <source>
        <strain>K12 / W3110 / ATCC 27325 / DSM 5911</strain>
    </source>
</reference>
<reference key="5">
    <citation type="journal article" date="1997" name="Science">
        <title>The complete genome sequence of Escherichia coli K-12.</title>
        <authorList>
            <person name="Blattner F.R."/>
            <person name="Plunkett G. III"/>
            <person name="Bloch C.A."/>
            <person name="Perna N.T."/>
            <person name="Burland V."/>
            <person name="Riley M."/>
            <person name="Collado-Vides J."/>
            <person name="Glasner J.D."/>
            <person name="Rode C.K."/>
            <person name="Mayhew G.F."/>
            <person name="Gregor J."/>
            <person name="Davis N.W."/>
            <person name="Kirkpatrick H.A."/>
            <person name="Goeden M.A."/>
            <person name="Rose D.J."/>
            <person name="Mau B."/>
            <person name="Shao Y."/>
        </authorList>
    </citation>
    <scope>NUCLEOTIDE SEQUENCE [LARGE SCALE GENOMIC DNA]</scope>
    <source>
        <strain>K12 / MG1655 / ATCC 47076</strain>
    </source>
</reference>
<reference key="6">
    <citation type="journal article" date="2006" name="Mol. Syst. Biol.">
        <title>Highly accurate genome sequences of Escherichia coli K-12 strains MG1655 and W3110.</title>
        <authorList>
            <person name="Hayashi K."/>
            <person name="Morooka N."/>
            <person name="Yamamoto Y."/>
            <person name="Fujita K."/>
            <person name="Isono K."/>
            <person name="Choi S."/>
            <person name="Ohtsubo E."/>
            <person name="Baba T."/>
            <person name="Wanner B.L."/>
            <person name="Mori H."/>
            <person name="Horiuchi T."/>
        </authorList>
    </citation>
    <scope>NUCLEOTIDE SEQUENCE [LARGE SCALE GENOMIC DNA]</scope>
    <source>
        <strain>K12 / W3110 / ATCC 27325 / DSM 5911</strain>
    </source>
</reference>
<reference key="7">
    <citation type="journal article" date="1991" name="J. Bacteriol.">
        <title>Mutational analysis of nitrate regulatory gene narL in Escherichia coli K-12.</title>
        <authorList>
            <person name="Egan S.M."/>
            <person name="Stewart V."/>
        </authorList>
    </citation>
    <scope>MUTAGENESIS</scope>
</reference>
<reference key="8">
    <citation type="journal article" date="1996" name="Biochemistry">
        <title>Structure of the Escherichia coli response regulator NarL.</title>
        <authorList>
            <person name="Baikalov I."/>
            <person name="Schroeder I."/>
            <person name="Kaczor-Grzeskowiak M."/>
            <person name="Grzeskowiak K."/>
            <person name="Gunsalus R.P."/>
            <person name="Dickerson R.E."/>
        </authorList>
    </citation>
    <scope>X-RAY CRYSTALLOGRAPHY (2.4 ANGSTROMS)</scope>
    <source>
        <strain>K12 / W3110 / ATCC 27325 / DSM 5911</strain>
    </source>
</reference>
<reference key="9">
    <citation type="journal article" date="1998" name="Biochemistry">
        <title>NarL dimerization? Suggestive evidence from a new crystal form.</title>
        <authorList>
            <person name="Baikalov I."/>
            <person name="Schroeder I."/>
            <person name="Kaczor-Grzeskowiak M."/>
            <person name="Cascio D."/>
            <person name="Gunsalus R.P."/>
            <person name="Dickerson R.E."/>
        </authorList>
    </citation>
    <scope>X-RAY CRYSTALLOGRAPHY (2.2 ANGSTROMS)</scope>
</reference>
<feature type="chain" id="PRO_0000081145" description="Nitrate/nitrite response regulator protein NarL">
    <location>
        <begin position="1"/>
        <end position="216"/>
    </location>
</feature>
<feature type="domain" description="Response regulatory" evidence="1">
    <location>
        <begin position="8"/>
        <end position="124"/>
    </location>
</feature>
<feature type="domain" description="HTH luxR-type" evidence="2">
    <location>
        <begin position="149"/>
        <end position="214"/>
    </location>
</feature>
<feature type="DNA-binding region" description="H-T-H motif" evidence="2">
    <location>
        <begin position="173"/>
        <end position="192"/>
    </location>
</feature>
<feature type="modified residue" description="4-aspartylphosphate" evidence="1">
    <location>
        <position position="59"/>
    </location>
</feature>
<feature type="sequence conflict" description="In Ref. 2; AAA24199." evidence="3" ref="2">
    <original>D</original>
    <variation>H</variation>
    <location>
        <position position="115"/>
    </location>
</feature>
<feature type="strand" evidence="4">
    <location>
        <begin position="7"/>
        <end position="12"/>
    </location>
</feature>
<feature type="helix" evidence="4">
    <location>
        <begin position="16"/>
        <end position="26"/>
    </location>
</feature>
<feature type="strand" evidence="4">
    <location>
        <begin position="32"/>
        <end position="40"/>
    </location>
</feature>
<feature type="helix" evidence="4">
    <location>
        <begin position="41"/>
        <end position="51"/>
    </location>
</feature>
<feature type="strand" evidence="4">
    <location>
        <begin position="54"/>
        <end position="59"/>
    </location>
</feature>
<feature type="helix" evidence="6">
    <location>
        <begin position="63"/>
        <end position="65"/>
    </location>
</feature>
<feature type="helix" evidence="4">
    <location>
        <begin position="67"/>
        <end position="76"/>
    </location>
</feature>
<feature type="strand" evidence="4">
    <location>
        <begin position="81"/>
        <end position="87"/>
    </location>
</feature>
<feature type="helix" evidence="4">
    <location>
        <begin position="92"/>
        <end position="100"/>
    </location>
</feature>
<feature type="strand" evidence="4">
    <location>
        <begin position="104"/>
        <end position="108"/>
    </location>
</feature>
<feature type="helix" evidence="4">
    <location>
        <begin position="113"/>
        <end position="125"/>
    </location>
</feature>
<feature type="turn" evidence="4">
    <location>
        <begin position="132"/>
        <end position="134"/>
    </location>
</feature>
<feature type="helix" evidence="4">
    <location>
        <begin position="135"/>
        <end position="141"/>
    </location>
</feature>
<feature type="helix" evidence="5">
    <location>
        <begin position="153"/>
        <end position="155"/>
    </location>
</feature>
<feature type="helix" evidence="5">
    <location>
        <begin position="158"/>
        <end position="167"/>
    </location>
</feature>
<feature type="turn" evidence="5">
    <location>
        <begin position="168"/>
        <end position="170"/>
    </location>
</feature>
<feature type="helix" evidence="5">
    <location>
        <begin position="173"/>
        <end position="180"/>
    </location>
</feature>
<feature type="helix" evidence="5">
    <location>
        <begin position="184"/>
        <end position="197"/>
    </location>
</feature>
<feature type="helix" evidence="5">
    <location>
        <begin position="203"/>
        <end position="212"/>
    </location>
</feature>
<dbReference type="EMBL" id="X13360">
    <property type="protein sequence ID" value="CAA31742.1"/>
    <property type="molecule type" value="Genomic_DNA"/>
</dbReference>
<dbReference type="EMBL" id="M24910">
    <property type="protein sequence ID" value="AAA24199.1"/>
    <property type="molecule type" value="Genomic_DNA"/>
</dbReference>
<dbReference type="EMBL" id="X14884">
    <property type="protein sequence ID" value="CAA33023.1"/>
    <property type="status" value="ALT_INIT"/>
    <property type="molecule type" value="Genomic_DNA"/>
</dbReference>
<dbReference type="EMBL" id="X69189">
    <property type="protein sequence ID" value="CAA48935.1"/>
    <property type="molecule type" value="Genomic_DNA"/>
</dbReference>
<dbReference type="EMBL" id="U00096">
    <property type="protein sequence ID" value="AAC74305.1"/>
    <property type="molecule type" value="Genomic_DNA"/>
</dbReference>
<dbReference type="EMBL" id="AP009048">
    <property type="protein sequence ID" value="BAA36089.1"/>
    <property type="molecule type" value="Genomic_DNA"/>
</dbReference>
<dbReference type="PIR" id="S09285">
    <property type="entry name" value="RGECNL"/>
</dbReference>
<dbReference type="RefSeq" id="NP_415739.1">
    <property type="nucleotide sequence ID" value="NC_000913.3"/>
</dbReference>
<dbReference type="RefSeq" id="WP_000070491.1">
    <property type="nucleotide sequence ID" value="NZ_STEB01000023.1"/>
</dbReference>
<dbReference type="PDB" id="1A04">
    <property type="method" value="X-ray"/>
    <property type="resolution" value="2.20 A"/>
    <property type="chains" value="A/B=2-216"/>
</dbReference>
<dbReference type="PDB" id="1JE8">
    <property type="method" value="X-ray"/>
    <property type="resolution" value="2.12 A"/>
    <property type="chains" value="A/B/E/F=147-216"/>
</dbReference>
<dbReference type="PDB" id="1RNL">
    <property type="method" value="X-ray"/>
    <property type="resolution" value="2.40 A"/>
    <property type="chains" value="A=2-216"/>
</dbReference>
<dbReference type="PDB" id="1ZG1">
    <property type="method" value="X-ray"/>
    <property type="resolution" value="2.30 A"/>
    <property type="chains" value="A/B/E/F=147-216"/>
</dbReference>
<dbReference type="PDB" id="1ZG5">
    <property type="method" value="X-ray"/>
    <property type="resolution" value="2.30 A"/>
    <property type="chains" value="A/B/E/F=147-216"/>
</dbReference>
<dbReference type="PDB" id="8U3B">
    <property type="method" value="EM"/>
    <property type="resolution" value="3.23 A"/>
    <property type="chains" value="G/H=151-216"/>
</dbReference>
<dbReference type="PDBsum" id="1A04"/>
<dbReference type="PDBsum" id="1JE8"/>
<dbReference type="PDBsum" id="1RNL"/>
<dbReference type="PDBsum" id="1ZG1"/>
<dbReference type="PDBsum" id="1ZG5"/>
<dbReference type="PDBsum" id="8U3B"/>
<dbReference type="EMDB" id="EMD-41856"/>
<dbReference type="SMR" id="P0AF28"/>
<dbReference type="BioGRID" id="4261632">
    <property type="interactions" value="132"/>
</dbReference>
<dbReference type="BioGRID" id="850162">
    <property type="interactions" value="1"/>
</dbReference>
<dbReference type="DIP" id="DIP-35941N"/>
<dbReference type="FunCoup" id="P0AF28">
    <property type="interactions" value="664"/>
</dbReference>
<dbReference type="IntAct" id="P0AF28">
    <property type="interactions" value="5"/>
</dbReference>
<dbReference type="STRING" id="511145.b1221"/>
<dbReference type="jPOST" id="P0AF28"/>
<dbReference type="PaxDb" id="511145-b1221"/>
<dbReference type="EnsemblBacteria" id="AAC74305">
    <property type="protein sequence ID" value="AAC74305"/>
    <property type="gene ID" value="b1221"/>
</dbReference>
<dbReference type="GeneID" id="93775289"/>
<dbReference type="GeneID" id="945795"/>
<dbReference type="KEGG" id="ecj:JW1212"/>
<dbReference type="KEGG" id="eco:b1221"/>
<dbReference type="KEGG" id="ecoc:C3026_07180"/>
<dbReference type="PATRIC" id="fig|1411691.4.peg.1061"/>
<dbReference type="EchoBASE" id="EB0637"/>
<dbReference type="eggNOG" id="COG2197">
    <property type="taxonomic scope" value="Bacteria"/>
</dbReference>
<dbReference type="HOGENOM" id="CLU_000445_90_8_6"/>
<dbReference type="InParanoid" id="P0AF28"/>
<dbReference type="OMA" id="DICIMDI"/>
<dbReference type="OrthoDB" id="9796655at2"/>
<dbReference type="PhylomeDB" id="P0AF28"/>
<dbReference type="BioCyc" id="EcoCyc:NARL-MONOMER"/>
<dbReference type="BioCyc" id="MetaCyc:NARL-MONOMER"/>
<dbReference type="EvolutionaryTrace" id="P0AF28"/>
<dbReference type="PRO" id="PR:P0AF28"/>
<dbReference type="Proteomes" id="UP000000625">
    <property type="component" value="Chromosome"/>
</dbReference>
<dbReference type="CollecTF" id="EXPREG_00000880"/>
<dbReference type="GO" id="GO:0005829">
    <property type="term" value="C:cytosol"/>
    <property type="evidence" value="ECO:0000314"/>
    <property type="project" value="EcoCyc"/>
</dbReference>
<dbReference type="GO" id="GO:0032993">
    <property type="term" value="C:protein-DNA complex"/>
    <property type="evidence" value="ECO:0000353"/>
    <property type="project" value="CollecTF"/>
</dbReference>
<dbReference type="GO" id="GO:0005524">
    <property type="term" value="F:ATP binding"/>
    <property type="evidence" value="ECO:0007669"/>
    <property type="project" value="UniProtKB-KW"/>
</dbReference>
<dbReference type="GO" id="GO:0003677">
    <property type="term" value="F:DNA binding"/>
    <property type="evidence" value="ECO:0000315"/>
    <property type="project" value="EcoCyc"/>
</dbReference>
<dbReference type="GO" id="GO:0001217">
    <property type="term" value="F:DNA-binding transcription repressor activity"/>
    <property type="evidence" value="ECO:0000353"/>
    <property type="project" value="CollecTF"/>
</dbReference>
<dbReference type="GO" id="GO:0042802">
    <property type="term" value="F:identical protein binding"/>
    <property type="evidence" value="ECO:0000353"/>
    <property type="project" value="IntAct"/>
</dbReference>
<dbReference type="GO" id="GO:0000976">
    <property type="term" value="F:transcription cis-regulatory region binding"/>
    <property type="evidence" value="ECO:0000353"/>
    <property type="project" value="CollecTF"/>
</dbReference>
<dbReference type="GO" id="GO:0042128">
    <property type="term" value="P:nitrate assimilation"/>
    <property type="evidence" value="ECO:0007669"/>
    <property type="project" value="UniProtKB-KW"/>
</dbReference>
<dbReference type="GO" id="GO:0000160">
    <property type="term" value="P:phosphorelay signal transduction system"/>
    <property type="evidence" value="ECO:0007669"/>
    <property type="project" value="UniProtKB-KW"/>
</dbReference>
<dbReference type="GO" id="GO:0006355">
    <property type="term" value="P:regulation of DNA-templated transcription"/>
    <property type="evidence" value="ECO:0000315"/>
    <property type="project" value="EcoCyc"/>
</dbReference>
<dbReference type="CDD" id="cd06170">
    <property type="entry name" value="LuxR_C_like"/>
    <property type="match status" value="1"/>
</dbReference>
<dbReference type="CDD" id="cd19931">
    <property type="entry name" value="REC_NarL"/>
    <property type="match status" value="1"/>
</dbReference>
<dbReference type="FunFam" id="1.10.10.10:FF:000103">
    <property type="entry name" value="Two-component system response regulator NarL"/>
    <property type="match status" value="1"/>
</dbReference>
<dbReference type="FunFam" id="3.40.50.2300:FF:000044">
    <property type="entry name" value="Two-component system response regulator NarL"/>
    <property type="match status" value="1"/>
</dbReference>
<dbReference type="Gene3D" id="3.40.50.2300">
    <property type="match status" value="1"/>
</dbReference>
<dbReference type="Gene3D" id="1.10.10.10">
    <property type="entry name" value="Winged helix-like DNA-binding domain superfamily/Winged helix DNA-binding domain"/>
    <property type="match status" value="1"/>
</dbReference>
<dbReference type="InterPro" id="IPR011006">
    <property type="entry name" value="CheY-like_superfamily"/>
</dbReference>
<dbReference type="InterPro" id="IPR016032">
    <property type="entry name" value="Sig_transdc_resp-reg_C-effctor"/>
</dbReference>
<dbReference type="InterPro" id="IPR001789">
    <property type="entry name" value="Sig_transdc_resp-reg_receiver"/>
</dbReference>
<dbReference type="InterPro" id="IPR000792">
    <property type="entry name" value="Tscrpt_reg_LuxR_C"/>
</dbReference>
<dbReference type="InterPro" id="IPR039420">
    <property type="entry name" value="WalR-like"/>
</dbReference>
<dbReference type="InterPro" id="IPR036388">
    <property type="entry name" value="WH-like_DNA-bd_sf"/>
</dbReference>
<dbReference type="NCBIfam" id="NF007935">
    <property type="entry name" value="PRK10651.1"/>
    <property type="match status" value="1"/>
</dbReference>
<dbReference type="PANTHER" id="PTHR43214:SF38">
    <property type="entry name" value="NITRATE_NITRITE RESPONSE REGULATOR PROTEIN NARL"/>
    <property type="match status" value="1"/>
</dbReference>
<dbReference type="PANTHER" id="PTHR43214">
    <property type="entry name" value="TWO-COMPONENT RESPONSE REGULATOR"/>
    <property type="match status" value="1"/>
</dbReference>
<dbReference type="Pfam" id="PF00196">
    <property type="entry name" value="GerE"/>
    <property type="match status" value="1"/>
</dbReference>
<dbReference type="Pfam" id="PF00072">
    <property type="entry name" value="Response_reg"/>
    <property type="match status" value="1"/>
</dbReference>
<dbReference type="PRINTS" id="PR00038">
    <property type="entry name" value="HTHLUXR"/>
</dbReference>
<dbReference type="SMART" id="SM00421">
    <property type="entry name" value="HTH_LUXR"/>
    <property type="match status" value="1"/>
</dbReference>
<dbReference type="SMART" id="SM00448">
    <property type="entry name" value="REC"/>
    <property type="match status" value="1"/>
</dbReference>
<dbReference type="SUPFAM" id="SSF46894">
    <property type="entry name" value="C-terminal effector domain of the bipartite response regulators"/>
    <property type="match status" value="1"/>
</dbReference>
<dbReference type="SUPFAM" id="SSF52172">
    <property type="entry name" value="CheY-like"/>
    <property type="match status" value="1"/>
</dbReference>
<dbReference type="PROSITE" id="PS00622">
    <property type="entry name" value="HTH_LUXR_1"/>
    <property type="match status" value="1"/>
</dbReference>
<dbReference type="PROSITE" id="PS50043">
    <property type="entry name" value="HTH_LUXR_2"/>
    <property type="match status" value="1"/>
</dbReference>
<dbReference type="PROSITE" id="PS50110">
    <property type="entry name" value="RESPONSE_REGULATORY"/>
    <property type="match status" value="1"/>
</dbReference>
<keyword id="KW-0002">3D-structure</keyword>
<keyword id="KW-0010">Activator</keyword>
<keyword id="KW-0067">ATP-binding</keyword>
<keyword id="KW-0238">DNA-binding</keyword>
<keyword id="KW-0534">Nitrate assimilation</keyword>
<keyword id="KW-0547">Nucleotide-binding</keyword>
<keyword id="KW-0597">Phosphoprotein</keyword>
<keyword id="KW-1185">Reference proteome</keyword>
<keyword id="KW-0678">Repressor</keyword>
<keyword id="KW-0804">Transcription</keyword>
<keyword id="KW-0805">Transcription regulation</keyword>
<keyword id="KW-0902">Two-component regulatory system</keyword>
<protein>
    <recommendedName>
        <fullName>Nitrate/nitrite response regulator protein NarL</fullName>
    </recommendedName>
</protein>
<name>NARL_ECOLI</name>
<accession>P0AF28</accession>
<accession>P10957</accession>
<organism>
    <name type="scientific">Escherichia coli (strain K12)</name>
    <dbReference type="NCBI Taxonomy" id="83333"/>
    <lineage>
        <taxon>Bacteria</taxon>
        <taxon>Pseudomonadati</taxon>
        <taxon>Pseudomonadota</taxon>
        <taxon>Gammaproteobacteria</taxon>
        <taxon>Enterobacterales</taxon>
        <taxon>Enterobacteriaceae</taxon>
        <taxon>Escherichia</taxon>
    </lineage>
</organism>